<comment type="function">
    <text evidence="2 3 4">Transporter for gamma-aminobutyrate (GABA) (PubMed:24142252, PubMed:8951816, PubMed:9677314). Can also transport beta-alanine (PubMed:9677314). Can translocate several open-chain GABA analogs (3-aminobutyrate, 3-aminopropanoate, cis-4-aminobutenoate) across the membrane via counterflow against GABA, but cannot transport muscimol (PubMed:9677314). Also functions as a low-affinity proline importer (PubMed:24142252).</text>
</comment>
<comment type="catalytic activity">
    <reaction evidence="10 11">
        <text>4-aminobutanoate(in) + H(+)(in) = 4-aminobutanoate(out) + H(+)(out)</text>
        <dbReference type="Rhea" id="RHEA:28915"/>
        <dbReference type="ChEBI" id="CHEBI:15378"/>
        <dbReference type="ChEBI" id="CHEBI:59888"/>
    </reaction>
</comment>
<comment type="catalytic activity">
    <reaction evidence="11">
        <text>beta-alanine(in) + H(+)(in) = beta-alanine(out) + H(+)(out)</text>
        <dbReference type="Rhea" id="RHEA:29459"/>
        <dbReference type="ChEBI" id="CHEBI:15378"/>
        <dbReference type="ChEBI" id="CHEBI:57966"/>
    </reaction>
</comment>
<comment type="biophysicochemical properties">
    <kinetics>
        <KM evidence="4">37 uM for GABA</KM>
        <KM evidence="2">77 uM for GABA</KM>
        <KM evidence="4">9.6 uM for beta-alanine</KM>
        <KM evidence="2">1 mM for proline</KM>
        <Vmax evidence="2">310.0 nmol/min/mg enzyme with GABA as substrate</Vmax>
    </kinetics>
</comment>
<comment type="pathway">
    <text evidence="3">Amino-acid degradation; 4-aminobutanoate degradation.</text>
</comment>
<comment type="subcellular location">
    <subcellularLocation>
        <location evidence="8">Cell membrane</location>
        <topology evidence="1">Multi-pass membrane protein</topology>
    </subcellularLocation>
</comment>
<comment type="induction">
    <text evidence="3">Positively regulated by TnrA under conditions of nitrogen limitation (PubMed:8951816). Expression is not significantly induced by GABA (PubMed:8951816).</text>
</comment>
<comment type="disruption phenotype">
    <text evidence="2 3">A transposon insertion in this gene eliminates the uptake of GABA and severely inhibits the utilization of GABA as a nitrogen source (PubMed:8951816). Triple deletion of gabP, putP and opuE confers resistance to the proline analog 3,4-dehydro-DL-proline (DHP), abolishes GABA utilization and prevents use of proline as a nitrogen source (PubMed:24142252).</text>
</comment>
<comment type="miscellaneous">
    <text evidence="4">The ligand-recognition profile of the B.subtilis GabP was found to differ substantially from that of the highly homologous E.coli GabP. B.subtilis GabP exhibits more stringent requirements than E.coli GabP for substrate recognition and translocation.</text>
</comment>
<comment type="similarity">
    <text evidence="8">Belongs to the amino acid-polyamine-organocation (APC) superfamily. Amino acid transporter (AAT) (TC 2.A.3.1) family.</text>
</comment>
<sequence>MNQSQSGLKKELKTRHMTMISIAGVIGAGLFVGSGSVIHSTGPGAVVSYALAGLLVIFIMRMLGEMSAVNPTSGSFSQYAHDAIGPWAGFTIGWLYWFFWVIVIAIEAIAGAGIIQYWFHDIPLWLTSLILTIVLTLTNVYSVKSFGEFEYWFSLIKVVTIIAFLIVGFAFIFGFAPGSEPVGFSNLTGKGGFFPEGISSVLLGIVVVIFSFMGTEIVAIAAGETSNPIESVTKATRSVVWRIIVFYVGSIAIVVALLPWNSANILESPFVAVLEHIGVPAAAQIMNFIVLTAVLSCLNSGLYTTSRMLYSLAERNEAPRRFMKLSKKGVPVQAIVAGTFFSYIAVVMNYFSPDTVFLFLVNSSGAIALLVYLVIAVSQLKMRKKLEKTNPEALKIKMWLFPFLTYLTIIAICGILVSMAFIDSMRDELLLTGVITGIVLISYLVFRKRKVSEKAAANPVTQQQPDILP</sequence>
<evidence type="ECO:0000255" key="1"/>
<evidence type="ECO:0000269" key="2">
    <source>
    </source>
</evidence>
<evidence type="ECO:0000269" key="3">
    <source>
    </source>
</evidence>
<evidence type="ECO:0000269" key="4">
    <source>
    </source>
</evidence>
<evidence type="ECO:0000303" key="5">
    <source>
    </source>
</evidence>
<evidence type="ECO:0000303" key="6">
    <source>
    </source>
</evidence>
<evidence type="ECO:0000303" key="7">
    <source>
    </source>
</evidence>
<evidence type="ECO:0000305" key="8"/>
<evidence type="ECO:0000305" key="9">
    <source>
    </source>
</evidence>
<evidence type="ECO:0000305" key="10">
    <source>
    </source>
</evidence>
<evidence type="ECO:0000305" key="11">
    <source>
    </source>
</evidence>
<dbReference type="EMBL" id="U31756">
    <property type="protein sequence ID" value="AAC44641.1"/>
    <property type="molecule type" value="Genomic_DNA"/>
</dbReference>
<dbReference type="EMBL" id="U51115">
    <property type="protein sequence ID" value="AAB62306.1"/>
    <property type="molecule type" value="Genomic_DNA"/>
</dbReference>
<dbReference type="EMBL" id="AL009126">
    <property type="protein sequence ID" value="CAB12450.2"/>
    <property type="molecule type" value="Genomic_DNA"/>
</dbReference>
<dbReference type="PIR" id="C69628">
    <property type="entry name" value="C69628"/>
</dbReference>
<dbReference type="RefSeq" id="NP_388512.2">
    <property type="nucleotide sequence ID" value="NC_000964.3"/>
</dbReference>
<dbReference type="RefSeq" id="WP_003233998.1">
    <property type="nucleotide sequence ID" value="NZ_OZ025638.1"/>
</dbReference>
<dbReference type="SMR" id="P46349"/>
<dbReference type="FunCoup" id="P46349">
    <property type="interactions" value="64"/>
</dbReference>
<dbReference type="STRING" id="224308.BSU06310"/>
<dbReference type="TCDB" id="2.A.3.1.5">
    <property type="family name" value="the amino acid-polyamine-organocation (apc) family"/>
</dbReference>
<dbReference type="PaxDb" id="224308-BSU06310"/>
<dbReference type="EnsemblBacteria" id="CAB12450">
    <property type="protein sequence ID" value="CAB12450"/>
    <property type="gene ID" value="BSU_06310"/>
</dbReference>
<dbReference type="GeneID" id="939485"/>
<dbReference type="KEGG" id="bsu:BSU06310"/>
<dbReference type="PATRIC" id="fig|224308.179.peg.684"/>
<dbReference type="eggNOG" id="COG1113">
    <property type="taxonomic scope" value="Bacteria"/>
</dbReference>
<dbReference type="InParanoid" id="P46349"/>
<dbReference type="OrthoDB" id="9780162at2"/>
<dbReference type="PhylomeDB" id="P46349"/>
<dbReference type="BioCyc" id="BSUB:BSU06310-MONOMER"/>
<dbReference type="SABIO-RK" id="P46349"/>
<dbReference type="UniPathway" id="UPA00733"/>
<dbReference type="Proteomes" id="UP000001570">
    <property type="component" value="Chromosome"/>
</dbReference>
<dbReference type="GO" id="GO:0005886">
    <property type="term" value="C:plasma membrane"/>
    <property type="evidence" value="ECO:0007669"/>
    <property type="project" value="UniProtKB-SubCell"/>
</dbReference>
<dbReference type="GO" id="GO:0015185">
    <property type="term" value="F:gamma-aminobutyric acid transmembrane transporter activity"/>
    <property type="evidence" value="ECO:0007669"/>
    <property type="project" value="InterPro"/>
</dbReference>
<dbReference type="GO" id="GO:0009450">
    <property type="term" value="P:gamma-aminobutyric acid catabolic process"/>
    <property type="evidence" value="ECO:0007669"/>
    <property type="project" value="UniProtKB-UniPathway"/>
</dbReference>
<dbReference type="FunFam" id="1.20.1740.10:FF:000001">
    <property type="entry name" value="Amino acid permease"/>
    <property type="match status" value="1"/>
</dbReference>
<dbReference type="Gene3D" id="1.20.1740.10">
    <property type="entry name" value="Amino acid/polyamine transporter I"/>
    <property type="match status" value="1"/>
</dbReference>
<dbReference type="InterPro" id="IPR004841">
    <property type="entry name" value="AA-permease/SLC12A_dom"/>
</dbReference>
<dbReference type="InterPro" id="IPR004840">
    <property type="entry name" value="Amino_acid_permease_CS"/>
</dbReference>
<dbReference type="InterPro" id="IPR011265">
    <property type="entry name" value="GABA_permease"/>
</dbReference>
<dbReference type="NCBIfam" id="TIGR01773">
    <property type="entry name" value="GABAperm"/>
    <property type="match status" value="1"/>
</dbReference>
<dbReference type="PANTHER" id="PTHR43495">
    <property type="entry name" value="GABA PERMEASE"/>
    <property type="match status" value="1"/>
</dbReference>
<dbReference type="PANTHER" id="PTHR43495:SF5">
    <property type="entry name" value="GAMMA-AMINOBUTYRIC ACID PERMEASE"/>
    <property type="match status" value="1"/>
</dbReference>
<dbReference type="Pfam" id="PF00324">
    <property type="entry name" value="AA_permease"/>
    <property type="match status" value="1"/>
</dbReference>
<dbReference type="PIRSF" id="PIRSF006060">
    <property type="entry name" value="AA_transporter"/>
    <property type="match status" value="1"/>
</dbReference>
<dbReference type="PROSITE" id="PS00218">
    <property type="entry name" value="AMINO_ACID_PERMEASE_1"/>
    <property type="match status" value="1"/>
</dbReference>
<protein>
    <recommendedName>
        <fullName evidence="6">Gamma-aminobutyric acid permease</fullName>
        <shortName evidence="6">GABA permease</shortName>
    </recommendedName>
    <alternativeName>
        <fullName evidence="7">4-aminobutyrate permease</fullName>
    </alternativeName>
    <alternativeName>
        <fullName evidence="5">Gamma-aminobutyrate permease</fullName>
    </alternativeName>
    <alternativeName>
        <fullName evidence="8">Proline transporter GabP</fullName>
    </alternativeName>
</protein>
<proteinExistence type="evidence at protein level"/>
<feature type="chain" id="PRO_0000054201" description="Gamma-aminobutyric acid permease">
    <location>
        <begin position="1"/>
        <end position="469"/>
    </location>
</feature>
<feature type="topological domain" description="Cytoplasmic" evidence="9">
    <location>
        <begin position="1"/>
        <end position="17"/>
    </location>
</feature>
<feature type="transmembrane region" description="Helical" evidence="1">
    <location>
        <begin position="18"/>
        <end position="38"/>
    </location>
</feature>
<feature type="topological domain" description="Extracellular" evidence="9">
    <location>
        <position position="39"/>
    </location>
</feature>
<feature type="transmembrane region" description="Helical" evidence="1">
    <location>
        <begin position="40"/>
        <end position="60"/>
    </location>
</feature>
<feature type="topological domain" description="Cytoplasmic" evidence="9">
    <location>
        <begin position="61"/>
        <end position="94"/>
    </location>
</feature>
<feature type="transmembrane region" description="Helical" evidence="1">
    <location>
        <begin position="95"/>
        <end position="115"/>
    </location>
</feature>
<feature type="topological domain" description="Extracellular" evidence="9">
    <location>
        <position position="116"/>
    </location>
</feature>
<feature type="transmembrane region" description="Helical" evidence="1">
    <location>
        <begin position="117"/>
        <end position="137"/>
    </location>
</feature>
<feature type="topological domain" description="Cytoplasmic" evidence="9">
    <location>
        <begin position="138"/>
        <end position="157"/>
    </location>
</feature>
<feature type="transmembrane region" description="Helical" evidence="1">
    <location>
        <begin position="158"/>
        <end position="178"/>
    </location>
</feature>
<feature type="topological domain" description="Extracellular" evidence="9">
    <location>
        <begin position="179"/>
        <end position="200"/>
    </location>
</feature>
<feature type="transmembrane region" description="Helical" evidence="1">
    <location>
        <begin position="201"/>
        <end position="221"/>
    </location>
</feature>
<feature type="topological domain" description="Cytoplasmic" evidence="9">
    <location>
        <begin position="222"/>
        <end position="242"/>
    </location>
</feature>
<feature type="transmembrane region" description="Helical" evidence="1">
    <location>
        <begin position="243"/>
        <end position="263"/>
    </location>
</feature>
<feature type="topological domain" description="Extracellular" evidence="9">
    <location>
        <begin position="264"/>
        <end position="269"/>
    </location>
</feature>
<feature type="transmembrane region" description="Helical" evidence="1">
    <location>
        <begin position="270"/>
        <end position="290"/>
    </location>
</feature>
<feature type="topological domain" description="Cytoplasmic" evidence="9">
    <location>
        <begin position="291"/>
        <end position="328"/>
    </location>
</feature>
<feature type="transmembrane region" description="Helical" evidence="1">
    <location>
        <begin position="329"/>
        <end position="349"/>
    </location>
</feature>
<feature type="topological domain" description="Extracellular" evidence="9">
    <location>
        <begin position="350"/>
        <end position="355"/>
    </location>
</feature>
<feature type="transmembrane region" description="Helical" evidence="1">
    <location>
        <begin position="356"/>
        <end position="376"/>
    </location>
</feature>
<feature type="topological domain" description="Cytoplasmic" evidence="9">
    <location>
        <begin position="377"/>
        <end position="401"/>
    </location>
</feature>
<feature type="transmembrane region" description="Helical" evidence="1">
    <location>
        <begin position="402"/>
        <end position="422"/>
    </location>
</feature>
<feature type="topological domain" description="Extracellular" evidence="9">
    <location>
        <begin position="423"/>
        <end position="425"/>
    </location>
</feature>
<feature type="transmembrane region" description="Helical" evidence="1">
    <location>
        <begin position="426"/>
        <end position="446"/>
    </location>
</feature>
<feature type="topological domain" description="Cytoplasmic" evidence="9">
    <location>
        <begin position="447"/>
        <end position="469"/>
    </location>
</feature>
<feature type="mutagenesis site" description="Lack of activity." evidence="2">
    <original>G</original>
    <variation>D</variation>
    <location>
        <position position="33"/>
    </location>
</feature>
<feature type="mutagenesis site" description="Lack of activity." evidence="2">
    <original>G</original>
    <variation>S</variation>
    <location>
        <position position="42"/>
    </location>
</feature>
<feature type="mutagenesis site" description="Lack of activity." evidence="2">
    <original>G</original>
    <variation>V</variation>
    <location>
        <position position="301"/>
    </location>
</feature>
<feature type="mutagenesis site" description="Lack of activity." evidence="2">
    <original>G</original>
    <variation>E</variation>
    <location>
        <position position="338"/>
    </location>
</feature>
<feature type="mutagenesis site" description="Lack of activity." evidence="2">
    <original>F</original>
    <variation>S</variation>
    <location>
        <position position="341"/>
    </location>
</feature>
<feature type="mutagenesis site" description="Lack of activity." evidence="2">
    <original>G</original>
    <variation>R</variation>
    <location>
        <position position="414"/>
    </location>
</feature>
<feature type="sequence conflict" description="In Ref. 2; AAB62306." evidence="8" ref="2">
    <original>S</original>
    <variation>P</variation>
    <location>
        <position position="36"/>
    </location>
</feature>
<gene>
    <name evidence="6" type="primary">gabP</name>
    <name type="ordered locus">BSU06310</name>
</gene>
<organism>
    <name type="scientific">Bacillus subtilis (strain 168)</name>
    <dbReference type="NCBI Taxonomy" id="224308"/>
    <lineage>
        <taxon>Bacteria</taxon>
        <taxon>Bacillati</taxon>
        <taxon>Bacillota</taxon>
        <taxon>Bacilli</taxon>
        <taxon>Bacillales</taxon>
        <taxon>Bacillaceae</taxon>
        <taxon>Bacillus</taxon>
    </lineage>
</organism>
<name>GABP_BACSU</name>
<keyword id="KW-0029">Amino-acid transport</keyword>
<keyword id="KW-1003">Cell membrane</keyword>
<keyword id="KW-0472">Membrane</keyword>
<keyword id="KW-1185">Reference proteome</keyword>
<keyword id="KW-0812">Transmembrane</keyword>
<keyword id="KW-1133">Transmembrane helix</keyword>
<keyword id="KW-0813">Transport</keyword>
<reference key="1">
    <citation type="journal article" date="1996" name="Mol. Microbiol.">
        <title>Expression of the Bacillus subtilis gabP gene is regulated independently in response to nitrogen and amino acid availability.</title>
        <authorList>
            <person name="Ferson A.E."/>
            <person name="Wray L.V. Jr."/>
            <person name="Fisher S.H."/>
        </authorList>
    </citation>
    <scope>NUCLEOTIDE SEQUENCE [GENOMIC DNA]</scope>
    <scope>FUNCTION</scope>
    <scope>PATHWAY</scope>
    <scope>INDUCTION</scope>
    <scope>DISRUPTION PHENOTYPE</scope>
    <source>
        <strain>168</strain>
    </source>
</reference>
<reference key="2">
    <citation type="journal article" date="1996" name="Microbiology">
        <title>The 52 degrees-55 degrees segment of the Bacillus subtilis chromosome: a region devoted to purine uptake and metabolism, and containing the genes cotA, gabP and guaA and the pur gene cluster within a 34960 bp nucleotide sequence.</title>
        <authorList>
            <person name="Borriss R."/>
            <person name="Porwollik S."/>
            <person name="Schroeter R."/>
        </authorList>
    </citation>
    <scope>NUCLEOTIDE SEQUENCE [GENOMIC DNA]</scope>
    <source>
        <strain>168</strain>
    </source>
</reference>
<reference key="3">
    <citation type="journal article" date="1997" name="Nature">
        <title>The complete genome sequence of the Gram-positive bacterium Bacillus subtilis.</title>
        <authorList>
            <person name="Kunst F."/>
            <person name="Ogasawara N."/>
            <person name="Moszer I."/>
            <person name="Albertini A.M."/>
            <person name="Alloni G."/>
            <person name="Azevedo V."/>
            <person name="Bertero M.G."/>
            <person name="Bessieres P."/>
            <person name="Bolotin A."/>
            <person name="Borchert S."/>
            <person name="Borriss R."/>
            <person name="Boursier L."/>
            <person name="Brans A."/>
            <person name="Braun M."/>
            <person name="Brignell S.C."/>
            <person name="Bron S."/>
            <person name="Brouillet S."/>
            <person name="Bruschi C.V."/>
            <person name="Caldwell B."/>
            <person name="Capuano V."/>
            <person name="Carter N.M."/>
            <person name="Choi S.-K."/>
            <person name="Codani J.-J."/>
            <person name="Connerton I.F."/>
            <person name="Cummings N.J."/>
            <person name="Daniel R.A."/>
            <person name="Denizot F."/>
            <person name="Devine K.M."/>
            <person name="Duesterhoeft A."/>
            <person name="Ehrlich S.D."/>
            <person name="Emmerson P.T."/>
            <person name="Entian K.-D."/>
            <person name="Errington J."/>
            <person name="Fabret C."/>
            <person name="Ferrari E."/>
            <person name="Foulger D."/>
            <person name="Fritz C."/>
            <person name="Fujita M."/>
            <person name="Fujita Y."/>
            <person name="Fuma S."/>
            <person name="Galizzi A."/>
            <person name="Galleron N."/>
            <person name="Ghim S.-Y."/>
            <person name="Glaser P."/>
            <person name="Goffeau A."/>
            <person name="Golightly E.J."/>
            <person name="Grandi G."/>
            <person name="Guiseppi G."/>
            <person name="Guy B.J."/>
            <person name="Haga K."/>
            <person name="Haiech J."/>
            <person name="Harwood C.R."/>
            <person name="Henaut A."/>
            <person name="Hilbert H."/>
            <person name="Holsappel S."/>
            <person name="Hosono S."/>
            <person name="Hullo M.-F."/>
            <person name="Itaya M."/>
            <person name="Jones L.-M."/>
            <person name="Joris B."/>
            <person name="Karamata D."/>
            <person name="Kasahara Y."/>
            <person name="Klaerr-Blanchard M."/>
            <person name="Klein C."/>
            <person name="Kobayashi Y."/>
            <person name="Koetter P."/>
            <person name="Koningstein G."/>
            <person name="Krogh S."/>
            <person name="Kumano M."/>
            <person name="Kurita K."/>
            <person name="Lapidus A."/>
            <person name="Lardinois S."/>
            <person name="Lauber J."/>
            <person name="Lazarevic V."/>
            <person name="Lee S.-M."/>
            <person name="Levine A."/>
            <person name="Liu H."/>
            <person name="Masuda S."/>
            <person name="Mauel C."/>
            <person name="Medigue C."/>
            <person name="Medina N."/>
            <person name="Mellado R.P."/>
            <person name="Mizuno M."/>
            <person name="Moestl D."/>
            <person name="Nakai S."/>
            <person name="Noback M."/>
            <person name="Noone D."/>
            <person name="O'Reilly M."/>
            <person name="Ogawa K."/>
            <person name="Ogiwara A."/>
            <person name="Oudega B."/>
            <person name="Park S.-H."/>
            <person name="Parro V."/>
            <person name="Pohl T.M."/>
            <person name="Portetelle D."/>
            <person name="Porwollik S."/>
            <person name="Prescott A.M."/>
            <person name="Presecan E."/>
            <person name="Pujic P."/>
            <person name="Purnelle B."/>
            <person name="Rapoport G."/>
            <person name="Rey M."/>
            <person name="Reynolds S."/>
            <person name="Rieger M."/>
            <person name="Rivolta C."/>
            <person name="Rocha E."/>
            <person name="Roche B."/>
            <person name="Rose M."/>
            <person name="Sadaie Y."/>
            <person name="Sato T."/>
            <person name="Scanlan E."/>
            <person name="Schleich S."/>
            <person name="Schroeter R."/>
            <person name="Scoffone F."/>
            <person name="Sekiguchi J."/>
            <person name="Sekowska A."/>
            <person name="Seror S.J."/>
            <person name="Serror P."/>
            <person name="Shin B.-S."/>
            <person name="Soldo B."/>
            <person name="Sorokin A."/>
            <person name="Tacconi E."/>
            <person name="Takagi T."/>
            <person name="Takahashi H."/>
            <person name="Takemaru K."/>
            <person name="Takeuchi M."/>
            <person name="Tamakoshi A."/>
            <person name="Tanaka T."/>
            <person name="Terpstra P."/>
            <person name="Tognoni A."/>
            <person name="Tosato V."/>
            <person name="Uchiyama S."/>
            <person name="Vandenbol M."/>
            <person name="Vannier F."/>
            <person name="Vassarotti A."/>
            <person name="Viari A."/>
            <person name="Wambutt R."/>
            <person name="Wedler E."/>
            <person name="Wedler H."/>
            <person name="Weitzenegger T."/>
            <person name="Winters P."/>
            <person name="Wipat A."/>
            <person name="Yamamoto H."/>
            <person name="Yamane K."/>
            <person name="Yasumoto K."/>
            <person name="Yata K."/>
            <person name="Yoshida K."/>
            <person name="Yoshikawa H.-F."/>
            <person name="Zumstein E."/>
            <person name="Yoshikawa H."/>
            <person name="Danchin A."/>
        </authorList>
    </citation>
    <scope>NUCLEOTIDE SEQUENCE [LARGE SCALE GENOMIC DNA]</scope>
    <source>
        <strain>168</strain>
    </source>
</reference>
<reference key="4">
    <citation type="journal article" date="2009" name="Microbiology">
        <title>From a consortium sequence to a unified sequence: the Bacillus subtilis 168 reference genome a decade later.</title>
        <authorList>
            <person name="Barbe V."/>
            <person name="Cruveiller S."/>
            <person name="Kunst F."/>
            <person name="Lenoble P."/>
            <person name="Meurice G."/>
            <person name="Sekowska A."/>
            <person name="Vallenet D."/>
            <person name="Wang T."/>
            <person name="Moszer I."/>
            <person name="Medigue C."/>
            <person name="Danchin A."/>
        </authorList>
    </citation>
    <scope>SEQUENCE REVISION TO 36</scope>
</reference>
<reference key="5">
    <citation type="journal article" date="1998" name="Biochem. J.">
        <title>4-Aminobutyrate (GABA) transporters from the amine-polyamine-choline superfamily: substrate specificity and ligand recognition profile of the 4-aminobutyrate permease from Bacillus subtilis.</title>
        <authorList>
            <person name="Brechtel C.E."/>
            <person name="King S.C."/>
        </authorList>
    </citation>
    <scope>FUNCTION</scope>
    <scope>SUBSTRATE SPECIFICITY</scope>
    <scope>BIOPHYSICOCHEMICAL PROPERTIES</scope>
</reference>
<reference key="6">
    <citation type="journal article" date="2014" name="J. Bacteriol.">
        <title>The gamma-aminobutyrate permease GabP serves as the third proline transporter of Bacillus subtilis.</title>
        <authorList>
            <person name="Zaprasis A."/>
            <person name="Hoffmann T."/>
            <person name="Stannek L."/>
            <person name="Gunka K."/>
            <person name="Commichau F.M."/>
            <person name="Bremer E."/>
        </authorList>
    </citation>
    <scope>FUNCTION</scope>
    <scope>BIOPHYSICOCHEMICAL PROPERTIES</scope>
    <scope>DISRUPTION PHENOTYPE</scope>
    <scope>MUTAGENESIS OF GLY-33; GLY-42; GLY-301; GLY-338; PHE-341 AND GLY-414</scope>
    <source>
        <strain>168 / JH642</strain>
    </source>
</reference>
<accession>P46349</accession>
<accession>P94473</accession>